<reference key="1">
    <citation type="journal article" date="2007" name="Proc. Natl. Acad. Sci. U.S.A.">
        <title>Genome sequencing and comparative analysis of Saccharomyces cerevisiae strain YJM789.</title>
        <authorList>
            <person name="Wei W."/>
            <person name="McCusker J.H."/>
            <person name="Hyman R.W."/>
            <person name="Jones T."/>
            <person name="Ning Y."/>
            <person name="Cao Z."/>
            <person name="Gu Z."/>
            <person name="Bruno D."/>
            <person name="Miranda M."/>
            <person name="Nguyen M."/>
            <person name="Wilhelmy J."/>
            <person name="Komp C."/>
            <person name="Tamse R."/>
            <person name="Wang X."/>
            <person name="Jia P."/>
            <person name="Luedi P."/>
            <person name="Oefner P.J."/>
            <person name="David L."/>
            <person name="Dietrich F.S."/>
            <person name="Li Y."/>
            <person name="Davis R.W."/>
            <person name="Steinmetz L.M."/>
        </authorList>
    </citation>
    <scope>NUCLEOTIDE SEQUENCE [LARGE SCALE GENOMIC DNA]</scope>
    <source>
        <strain>YJM789</strain>
    </source>
</reference>
<comment type="subcellular location">
    <subcellularLocation>
        <location evidence="1">Mitochondrion intermembrane space</location>
    </subcellularLocation>
    <text evidence="1">Imported into the mitochondria via the mitochondrial disulfide relay system.</text>
</comment>
<comment type="domain">
    <text evidence="1">The twin Cx9C motifs are involved in the recognition by the mitochondrial disulfide relay system.</text>
</comment>
<comment type="similarity">
    <text evidence="3">Belongs to the CMC4 family.</text>
</comment>
<gene>
    <name type="primary">CMC4</name>
    <name type="ORF">SCY_4372</name>
</gene>
<name>CMC4_YEAS7</name>
<organism>
    <name type="scientific">Saccharomyces cerevisiae (strain YJM789)</name>
    <name type="common">Baker's yeast</name>
    <dbReference type="NCBI Taxonomy" id="307796"/>
    <lineage>
        <taxon>Eukaryota</taxon>
        <taxon>Fungi</taxon>
        <taxon>Dikarya</taxon>
        <taxon>Ascomycota</taxon>
        <taxon>Saccharomycotina</taxon>
        <taxon>Saccharomycetes</taxon>
        <taxon>Saccharomycetales</taxon>
        <taxon>Saccharomycetaceae</taxon>
        <taxon>Saccharomyces</taxon>
    </lineage>
</organism>
<sequence length="73" mass="8217">MSNPCQKEACAIQDCLLSHQYDDAKCAKVIDQLYICCSKFYKDNGKDSRSPCCPLPSLLELKMKQRKLTPGDS</sequence>
<evidence type="ECO:0000250" key="1"/>
<evidence type="ECO:0000255" key="2">
    <source>
        <dbReference type="PROSITE-ProRule" id="PRU01150"/>
    </source>
</evidence>
<evidence type="ECO:0000305" key="3"/>
<protein>
    <recommendedName>
        <fullName>Cx9C motif-containing protein 4, mitochondrial</fullName>
    </recommendedName>
</protein>
<keyword id="KW-1015">Disulfide bond</keyword>
<keyword id="KW-0496">Mitochondrion</keyword>
<keyword id="KW-0677">Repeat</keyword>
<dbReference type="EMBL" id="AAFW02000021">
    <property type="protein sequence ID" value="EDN64130.1"/>
    <property type="molecule type" value="Genomic_DNA"/>
</dbReference>
<dbReference type="SMR" id="A6ZMQ6"/>
<dbReference type="HOGENOM" id="CLU_177210_0_0_1"/>
<dbReference type="Proteomes" id="UP000007060">
    <property type="component" value="Unassembled WGS sequence"/>
</dbReference>
<dbReference type="GO" id="GO:0005758">
    <property type="term" value="C:mitochondrial intermembrane space"/>
    <property type="evidence" value="ECO:0000304"/>
    <property type="project" value="Reactome"/>
</dbReference>
<dbReference type="FunFam" id="1.10.287.1130:FF:000008">
    <property type="entry name" value="Cx9C motif-containing protein 4, mitochondrial"/>
    <property type="match status" value="1"/>
</dbReference>
<dbReference type="Gene3D" id="1.10.287.1130">
    <property type="entry name" value="CytochromE C oxidase copper chaperone"/>
    <property type="match status" value="1"/>
</dbReference>
<dbReference type="InterPro" id="IPR027179">
    <property type="entry name" value="CMC4"/>
</dbReference>
<dbReference type="InterPro" id="IPR009069">
    <property type="entry name" value="Cys_alpha_HP_mot_SF"/>
</dbReference>
<dbReference type="PANTHER" id="PTHR15590">
    <property type="entry name" value="CX9C MOTIF-CONTAINING PROTEIN 4"/>
    <property type="match status" value="1"/>
</dbReference>
<dbReference type="PANTHER" id="PTHR15590:SF0">
    <property type="entry name" value="CX9C MOTIF-CONTAINING PROTEIN 4"/>
    <property type="match status" value="1"/>
</dbReference>
<dbReference type="Pfam" id="PF08991">
    <property type="entry name" value="CMC4"/>
    <property type="match status" value="1"/>
</dbReference>
<dbReference type="SUPFAM" id="SSF47072">
    <property type="entry name" value="Cysteine alpha-hairpin motif"/>
    <property type="match status" value="1"/>
</dbReference>
<dbReference type="PROSITE" id="PS51808">
    <property type="entry name" value="CHCH"/>
    <property type="match status" value="1"/>
</dbReference>
<accession>A6ZMQ6</accession>
<feature type="chain" id="PRO_0000408580" description="Cx9C motif-containing protein 4, mitochondrial">
    <location>
        <begin position="1"/>
        <end position="73"/>
    </location>
</feature>
<feature type="domain" description="CHCH" evidence="2">
    <location>
        <begin position="2"/>
        <end position="44"/>
    </location>
</feature>
<feature type="short sequence motif" description="Cx9C motif 1" evidence="2">
    <location>
        <begin position="5"/>
        <end position="15"/>
    </location>
</feature>
<feature type="short sequence motif" description="Cx9C motif 2" evidence="2">
    <location>
        <begin position="26"/>
        <end position="36"/>
    </location>
</feature>
<feature type="disulfide bond" evidence="2">
    <location>
        <begin position="5"/>
        <end position="36"/>
    </location>
</feature>
<feature type="disulfide bond" evidence="2">
    <location>
        <begin position="15"/>
        <end position="26"/>
    </location>
</feature>
<proteinExistence type="inferred from homology"/>